<keyword id="KW-0028">Amino-acid biosynthesis</keyword>
<keyword id="KW-0057">Aromatic amino acid biosynthesis</keyword>
<keyword id="KW-0963">Cytoplasm</keyword>
<keyword id="KW-0808">Transferase</keyword>
<comment type="function">
    <text evidence="1">Catalyzes the transfer of the enolpyruvyl moiety of phosphoenolpyruvate (PEP) to the 5-hydroxyl of shikimate-3-phosphate (S3P) to produce enolpyruvyl shikimate-3-phosphate and inorganic phosphate.</text>
</comment>
<comment type="catalytic activity">
    <reaction evidence="1">
        <text>3-phosphoshikimate + phosphoenolpyruvate = 5-O-(1-carboxyvinyl)-3-phosphoshikimate + phosphate</text>
        <dbReference type="Rhea" id="RHEA:21256"/>
        <dbReference type="ChEBI" id="CHEBI:43474"/>
        <dbReference type="ChEBI" id="CHEBI:57701"/>
        <dbReference type="ChEBI" id="CHEBI:58702"/>
        <dbReference type="ChEBI" id="CHEBI:145989"/>
        <dbReference type="EC" id="2.5.1.19"/>
    </reaction>
    <physiologicalReaction direction="left-to-right" evidence="1">
        <dbReference type="Rhea" id="RHEA:21257"/>
    </physiologicalReaction>
</comment>
<comment type="pathway">
    <text evidence="1">Metabolic intermediate biosynthesis; chorismate biosynthesis; chorismate from D-erythrose 4-phosphate and phosphoenolpyruvate: step 6/7.</text>
</comment>
<comment type="subunit">
    <text evidence="1">Monomer.</text>
</comment>
<comment type="subcellular location">
    <subcellularLocation>
        <location evidence="1">Cytoplasm</location>
    </subcellularLocation>
</comment>
<comment type="similarity">
    <text evidence="1">Belongs to the EPSP synthase family.</text>
</comment>
<proteinExistence type="inferred from homology"/>
<reference key="1">
    <citation type="submission" date="2007-10" db="EMBL/GenBank/DDBJ databases">
        <title>Genome sequence of Campylobacter concisus 13826 isolated from human feces.</title>
        <authorList>
            <person name="Fouts D.E."/>
            <person name="Mongodin E.F."/>
            <person name="Puiu D."/>
            <person name="Sebastian Y."/>
            <person name="Miller W.G."/>
            <person name="Mandrell R.E."/>
            <person name="On S."/>
            <person name="Nelson K.E."/>
        </authorList>
    </citation>
    <scope>NUCLEOTIDE SEQUENCE [LARGE SCALE GENOMIC DNA]</scope>
    <source>
        <strain>13826</strain>
    </source>
</reference>
<gene>
    <name evidence="1" type="primary">aroA</name>
    <name type="ordered locus">Ccon26_05440</name>
    <name type="ORF">CCC13826_1565</name>
</gene>
<protein>
    <recommendedName>
        <fullName evidence="1">3-phosphoshikimate 1-carboxyvinyltransferase</fullName>
        <ecNumber evidence="1">2.5.1.19</ecNumber>
    </recommendedName>
    <alternativeName>
        <fullName evidence="1">5-enolpyruvylshikimate-3-phosphate synthase</fullName>
        <shortName evidence="1">EPSP synthase</shortName>
        <shortName evidence="1">EPSPS</shortName>
    </alternativeName>
</protein>
<dbReference type="EC" id="2.5.1.19" evidence="1"/>
<dbReference type="EMBL" id="CP000792">
    <property type="protein sequence ID" value="ABW74752.1"/>
    <property type="molecule type" value="Genomic_DNA"/>
</dbReference>
<dbReference type="RefSeq" id="WP_048809770.1">
    <property type="nucleotide sequence ID" value="NC_009802.2"/>
</dbReference>
<dbReference type="SMR" id="A8Z6D5"/>
<dbReference type="STRING" id="360104.CCC13826_1565"/>
<dbReference type="KEGG" id="cco:CCC13826_1565"/>
<dbReference type="eggNOG" id="COG0128">
    <property type="taxonomic scope" value="Bacteria"/>
</dbReference>
<dbReference type="HOGENOM" id="CLU_024321_0_1_7"/>
<dbReference type="OrthoDB" id="9809920at2"/>
<dbReference type="UniPathway" id="UPA00053">
    <property type="reaction ID" value="UER00089"/>
</dbReference>
<dbReference type="Proteomes" id="UP000001121">
    <property type="component" value="Chromosome"/>
</dbReference>
<dbReference type="GO" id="GO:0005737">
    <property type="term" value="C:cytoplasm"/>
    <property type="evidence" value="ECO:0007669"/>
    <property type="project" value="UniProtKB-SubCell"/>
</dbReference>
<dbReference type="GO" id="GO:0003866">
    <property type="term" value="F:3-phosphoshikimate 1-carboxyvinyltransferase activity"/>
    <property type="evidence" value="ECO:0007669"/>
    <property type="project" value="UniProtKB-UniRule"/>
</dbReference>
<dbReference type="GO" id="GO:0008652">
    <property type="term" value="P:amino acid biosynthetic process"/>
    <property type="evidence" value="ECO:0007669"/>
    <property type="project" value="UniProtKB-KW"/>
</dbReference>
<dbReference type="GO" id="GO:0009073">
    <property type="term" value="P:aromatic amino acid family biosynthetic process"/>
    <property type="evidence" value="ECO:0007669"/>
    <property type="project" value="UniProtKB-KW"/>
</dbReference>
<dbReference type="GO" id="GO:0009423">
    <property type="term" value="P:chorismate biosynthetic process"/>
    <property type="evidence" value="ECO:0007669"/>
    <property type="project" value="UniProtKB-UniRule"/>
</dbReference>
<dbReference type="CDD" id="cd01556">
    <property type="entry name" value="EPSP_synthase"/>
    <property type="match status" value="1"/>
</dbReference>
<dbReference type="FunFam" id="3.65.10.10:FF:000005">
    <property type="entry name" value="3-phosphoshikimate 1-carboxyvinyltransferase"/>
    <property type="match status" value="1"/>
</dbReference>
<dbReference type="Gene3D" id="3.65.10.10">
    <property type="entry name" value="Enolpyruvate transferase domain"/>
    <property type="match status" value="2"/>
</dbReference>
<dbReference type="HAMAP" id="MF_00210">
    <property type="entry name" value="EPSP_synth"/>
    <property type="match status" value="1"/>
</dbReference>
<dbReference type="InterPro" id="IPR001986">
    <property type="entry name" value="Enolpyruvate_Tfrase_dom"/>
</dbReference>
<dbReference type="InterPro" id="IPR036968">
    <property type="entry name" value="Enolpyruvate_Tfrase_sf"/>
</dbReference>
<dbReference type="InterPro" id="IPR006264">
    <property type="entry name" value="EPSP_synthase"/>
</dbReference>
<dbReference type="InterPro" id="IPR023193">
    <property type="entry name" value="EPSP_synthase_CS"/>
</dbReference>
<dbReference type="InterPro" id="IPR013792">
    <property type="entry name" value="RNA3'P_cycl/enolpyr_Trfase_a/b"/>
</dbReference>
<dbReference type="NCBIfam" id="TIGR01356">
    <property type="entry name" value="aroA"/>
    <property type="match status" value="1"/>
</dbReference>
<dbReference type="PANTHER" id="PTHR21090">
    <property type="entry name" value="AROM/DEHYDROQUINATE SYNTHASE"/>
    <property type="match status" value="1"/>
</dbReference>
<dbReference type="PANTHER" id="PTHR21090:SF5">
    <property type="entry name" value="PENTAFUNCTIONAL AROM POLYPEPTIDE"/>
    <property type="match status" value="1"/>
</dbReference>
<dbReference type="Pfam" id="PF00275">
    <property type="entry name" value="EPSP_synthase"/>
    <property type="match status" value="1"/>
</dbReference>
<dbReference type="PIRSF" id="PIRSF000505">
    <property type="entry name" value="EPSPS"/>
    <property type="match status" value="1"/>
</dbReference>
<dbReference type="SUPFAM" id="SSF55205">
    <property type="entry name" value="EPT/RTPC-like"/>
    <property type="match status" value="1"/>
</dbReference>
<dbReference type="PROSITE" id="PS00104">
    <property type="entry name" value="EPSP_SYNTHASE_1"/>
    <property type="match status" value="1"/>
</dbReference>
<dbReference type="PROSITE" id="PS00885">
    <property type="entry name" value="EPSP_SYNTHASE_2"/>
    <property type="match status" value="1"/>
</dbReference>
<organism>
    <name type="scientific">Campylobacter concisus (strain 13826)</name>
    <dbReference type="NCBI Taxonomy" id="360104"/>
    <lineage>
        <taxon>Bacteria</taxon>
        <taxon>Pseudomonadati</taxon>
        <taxon>Campylobacterota</taxon>
        <taxon>Epsilonproteobacteria</taxon>
        <taxon>Campylobacterales</taxon>
        <taxon>Campylobacteraceae</taxon>
        <taxon>Campylobacter</taxon>
    </lineage>
</organism>
<sequence length="428" mass="47049">MRIYPLEKSLNLTIDDIAADKSISHRCAMFSLLSDKPSRVRNYLRAGDTLNTLKIVELLGAKIEDNGAEIIITPPQKIKEPNEILECGNSGTAMRLFMGLLAAQDGFFVLSGDKYLNSRPMARIAKPLNEMGAKIDGANNANNAPLCIRGTKFERFSFDSKIASAQVKSALLLAALYSNGCKFSEPELSRDHTERMLAGMGANIKRDELEITLEPMRSPLSPLDIDVPNDPSSAFFFAVAALIIPNSHIILKNILLNKTRIEAYRVLEKMGAEIKFHKTSSKYEDIGDIEVRYSPNLKGIEVSENISWLIDEAPALAIAFACAKGQSKLTNAKELRVKESDRIAVTINALKQCGVDASELEDGFIINGSEAKFATIDSHGDHRIAMSFAILGLKCGMQIEKSEFIATSFPNFAEILKKMGARVEDRAC</sequence>
<name>AROA_CAMC1</name>
<feature type="chain" id="PRO_1000071736" description="3-phosphoshikimate 1-carboxyvinyltransferase">
    <location>
        <begin position="1"/>
        <end position="428"/>
    </location>
</feature>
<feature type="active site" description="Proton acceptor" evidence="1">
    <location>
        <position position="311"/>
    </location>
</feature>
<feature type="binding site" evidence="1">
    <location>
        <position position="21"/>
    </location>
    <ligand>
        <name>3-phosphoshikimate</name>
        <dbReference type="ChEBI" id="CHEBI:145989"/>
    </ligand>
</feature>
<feature type="binding site" evidence="1">
    <location>
        <position position="21"/>
    </location>
    <ligand>
        <name>phosphoenolpyruvate</name>
        <dbReference type="ChEBI" id="CHEBI:58702"/>
    </ligand>
</feature>
<feature type="binding site" evidence="1">
    <location>
        <position position="22"/>
    </location>
    <ligand>
        <name>3-phosphoshikimate</name>
        <dbReference type="ChEBI" id="CHEBI:145989"/>
    </ligand>
</feature>
<feature type="binding site" evidence="1">
    <location>
        <position position="26"/>
    </location>
    <ligand>
        <name>3-phosphoshikimate</name>
        <dbReference type="ChEBI" id="CHEBI:145989"/>
    </ligand>
</feature>
<feature type="binding site" evidence="1">
    <location>
        <position position="91"/>
    </location>
    <ligand>
        <name>phosphoenolpyruvate</name>
        <dbReference type="ChEBI" id="CHEBI:58702"/>
    </ligand>
</feature>
<feature type="binding site" evidence="1">
    <location>
        <position position="119"/>
    </location>
    <ligand>
        <name>phosphoenolpyruvate</name>
        <dbReference type="ChEBI" id="CHEBI:58702"/>
    </ligand>
</feature>
<feature type="binding site" evidence="1">
    <location>
        <position position="164"/>
    </location>
    <ligand>
        <name>3-phosphoshikimate</name>
        <dbReference type="ChEBI" id="CHEBI:145989"/>
    </ligand>
</feature>
<feature type="binding site" evidence="1">
    <location>
        <position position="166"/>
    </location>
    <ligand>
        <name>3-phosphoshikimate</name>
        <dbReference type="ChEBI" id="CHEBI:145989"/>
    </ligand>
</feature>
<feature type="binding site" evidence="1">
    <location>
        <position position="166"/>
    </location>
    <ligand>
        <name>phosphoenolpyruvate</name>
        <dbReference type="ChEBI" id="CHEBI:58702"/>
    </ligand>
</feature>
<feature type="binding site" evidence="1">
    <location>
        <position position="311"/>
    </location>
    <ligand>
        <name>3-phosphoshikimate</name>
        <dbReference type="ChEBI" id="CHEBI:145989"/>
    </ligand>
</feature>
<feature type="binding site" evidence="1">
    <location>
        <position position="338"/>
    </location>
    <ligand>
        <name>3-phosphoshikimate</name>
        <dbReference type="ChEBI" id="CHEBI:145989"/>
    </ligand>
</feature>
<feature type="binding site" evidence="1">
    <location>
        <position position="342"/>
    </location>
    <ligand>
        <name>phosphoenolpyruvate</name>
        <dbReference type="ChEBI" id="CHEBI:58702"/>
    </ligand>
</feature>
<feature type="binding site" evidence="1">
    <location>
        <position position="383"/>
    </location>
    <ligand>
        <name>phosphoenolpyruvate</name>
        <dbReference type="ChEBI" id="CHEBI:58702"/>
    </ligand>
</feature>
<evidence type="ECO:0000255" key="1">
    <source>
        <dbReference type="HAMAP-Rule" id="MF_00210"/>
    </source>
</evidence>
<accession>A8Z6D5</accession>